<sequence>MSVYRRRLSPLKPNQVIDYQDVELLRTFITDQGKILPRRVTGLTAKQQRAVTKAIKQARVLALLPFVNRES</sequence>
<organism>
    <name type="scientific">Cyanophora paradoxa</name>
    <dbReference type="NCBI Taxonomy" id="2762"/>
    <lineage>
        <taxon>Eukaryota</taxon>
        <taxon>Glaucocystophyceae</taxon>
        <taxon>Cyanophoraceae</taxon>
        <taxon>Cyanophora</taxon>
    </lineage>
</organism>
<geneLocation type="cyanelle"/>
<dbReference type="EMBL" id="X17498">
    <property type="protein sequence ID" value="CAA35533.1"/>
    <property type="molecule type" value="Genomic_DNA"/>
</dbReference>
<dbReference type="EMBL" id="U30821">
    <property type="protein sequence ID" value="AAA81234.1"/>
    <property type="molecule type" value="Genomic_DNA"/>
</dbReference>
<dbReference type="PIR" id="S08230">
    <property type="entry name" value="R3KT18"/>
</dbReference>
<dbReference type="RefSeq" id="NP_043203.1">
    <property type="nucleotide sequence ID" value="NC_001675.1"/>
</dbReference>
<dbReference type="SMR" id="P15760"/>
<dbReference type="GeneID" id="801517"/>
<dbReference type="GO" id="GO:0009842">
    <property type="term" value="C:cyanelle"/>
    <property type="evidence" value="ECO:0007669"/>
    <property type="project" value="UniProtKB-SubCell"/>
</dbReference>
<dbReference type="GO" id="GO:0022627">
    <property type="term" value="C:cytosolic small ribosomal subunit"/>
    <property type="evidence" value="ECO:0007669"/>
    <property type="project" value="TreeGrafter"/>
</dbReference>
<dbReference type="GO" id="GO:0070181">
    <property type="term" value="F:small ribosomal subunit rRNA binding"/>
    <property type="evidence" value="ECO:0007669"/>
    <property type="project" value="TreeGrafter"/>
</dbReference>
<dbReference type="GO" id="GO:0003735">
    <property type="term" value="F:structural constituent of ribosome"/>
    <property type="evidence" value="ECO:0007669"/>
    <property type="project" value="InterPro"/>
</dbReference>
<dbReference type="GO" id="GO:0006412">
    <property type="term" value="P:translation"/>
    <property type="evidence" value="ECO:0007669"/>
    <property type="project" value="InterPro"/>
</dbReference>
<dbReference type="FunFam" id="4.10.640.10:FF:000002">
    <property type="entry name" value="30S ribosomal protein S18, chloroplastic"/>
    <property type="match status" value="1"/>
</dbReference>
<dbReference type="Gene3D" id="4.10.640.10">
    <property type="entry name" value="Ribosomal protein S18"/>
    <property type="match status" value="1"/>
</dbReference>
<dbReference type="HAMAP" id="MF_00270">
    <property type="entry name" value="Ribosomal_bS18"/>
    <property type="match status" value="1"/>
</dbReference>
<dbReference type="InterPro" id="IPR001648">
    <property type="entry name" value="Ribosomal_bS18"/>
</dbReference>
<dbReference type="InterPro" id="IPR018275">
    <property type="entry name" value="Ribosomal_bS18_CS"/>
</dbReference>
<dbReference type="InterPro" id="IPR036870">
    <property type="entry name" value="Ribosomal_bS18_sf"/>
</dbReference>
<dbReference type="NCBIfam" id="TIGR00165">
    <property type="entry name" value="S18"/>
    <property type="match status" value="1"/>
</dbReference>
<dbReference type="PANTHER" id="PTHR13479">
    <property type="entry name" value="30S RIBOSOMAL PROTEIN S18"/>
    <property type="match status" value="1"/>
</dbReference>
<dbReference type="PANTHER" id="PTHR13479:SF40">
    <property type="entry name" value="SMALL RIBOSOMAL SUBUNIT PROTEIN BS18M"/>
    <property type="match status" value="1"/>
</dbReference>
<dbReference type="Pfam" id="PF01084">
    <property type="entry name" value="Ribosomal_S18"/>
    <property type="match status" value="1"/>
</dbReference>
<dbReference type="PRINTS" id="PR00974">
    <property type="entry name" value="RIBOSOMALS18"/>
</dbReference>
<dbReference type="SUPFAM" id="SSF46911">
    <property type="entry name" value="Ribosomal protein S18"/>
    <property type="match status" value="1"/>
</dbReference>
<dbReference type="PROSITE" id="PS00057">
    <property type="entry name" value="RIBOSOMAL_S18"/>
    <property type="match status" value="1"/>
</dbReference>
<gene>
    <name type="primary">rps18</name>
</gene>
<feature type="chain" id="PRO_0000111271" description="Small ribosomal subunit protein bS18c">
    <location>
        <begin position="1"/>
        <end position="71"/>
    </location>
</feature>
<name>RR18_CYAPA</name>
<reference key="1">
    <citation type="journal article" date="1990" name="J. Mol. Evol.">
        <title>The nucleotide sequence of five ribosomal protein genes from the cyanelles of Cyanophora paradoxa: implications concerning the phylogenetic relationship between cyanelles and chloroplasts.</title>
        <authorList>
            <person name="Evrard J.L."/>
            <person name="Kuntz M."/>
            <person name="Weil J.H."/>
        </authorList>
    </citation>
    <scope>NUCLEOTIDE SEQUENCE [GENOMIC DNA]</scope>
    <source>
        <strain>UTEX LB 555 / Pringsheim</strain>
    </source>
</reference>
<reference key="2">
    <citation type="journal article" date="1995" name="Plant Mol. Biol. Rep.">
        <title>Nucleotide sequence of the cyanelle DNA from Cyanophora paradoxa.</title>
        <authorList>
            <person name="Stirewalt V.L."/>
            <person name="Michalowski C.B."/>
            <person name="Loeffelhardt W."/>
            <person name="Bohnert H.J."/>
            <person name="Bryant D.A."/>
        </authorList>
    </citation>
    <scope>NUCLEOTIDE SEQUENCE [LARGE SCALE GENOMIC DNA]</scope>
    <source>
        <strain>UTEX LB 555 / Pringsheim</strain>
    </source>
</reference>
<reference key="3">
    <citation type="book" date="1997" name="Eukaryotism and symbiosis">
        <title>The complete sequence of the cyanelle genome of Cyanophora paradoxa: the genetic complexity of a primitive plastid.</title>
        <editorList>
            <person name="Schenk H.E.A."/>
            <person name="Herrmann R."/>
            <person name="Jeon K.W."/>
            <person name="Mueller N.E."/>
            <person name="Schwemmler W."/>
        </editorList>
        <authorList>
            <person name="Loeffelhardt W."/>
            <person name="Stirewalt V.L."/>
            <person name="Michalowski C.B."/>
            <person name="Annarella M."/>
            <person name="Farley J.Y."/>
            <person name="Schluchter W.M."/>
            <person name="Chung S."/>
            <person name="Newmann-Spallart C."/>
            <person name="Steiner J.M."/>
            <person name="Jakowitsch J."/>
            <person name="Bohnert H.J."/>
            <person name="Bryant D.A."/>
        </authorList>
    </citation>
    <scope>NUCLEOTIDE SEQUENCE [LARGE SCALE GENOMIC DNA]</scope>
    <source>
        <strain>UTEX LB 555 / Pringsheim</strain>
    </source>
</reference>
<proteinExistence type="inferred from homology"/>
<protein>
    <recommendedName>
        <fullName evidence="1">Small ribosomal subunit protein bS18c</fullName>
    </recommendedName>
    <alternativeName>
        <fullName>Cyanelle 30S ribosomal protein S18</fullName>
    </alternativeName>
</protein>
<evidence type="ECO:0000305" key="1"/>
<accession>P15760</accession>
<comment type="subunit">
    <text>Part of the 30S ribosomal subunit.</text>
</comment>
<comment type="subcellular location">
    <subcellularLocation>
        <location>Plastid</location>
        <location>Cyanelle</location>
    </subcellularLocation>
</comment>
<comment type="similarity">
    <text evidence="1">Belongs to the bacterial ribosomal protein bS18 family.</text>
</comment>
<keyword id="KW-0194">Cyanelle</keyword>
<keyword id="KW-0934">Plastid</keyword>
<keyword id="KW-0687">Ribonucleoprotein</keyword>
<keyword id="KW-0689">Ribosomal protein</keyword>
<keyword id="KW-0694">RNA-binding</keyword>
<keyword id="KW-0699">rRNA-binding</keyword>